<organism>
    <name type="scientific">Bartonella bacilliformis (strain ATCC 35685 / KC583 / Herrer 020/F12,63)</name>
    <dbReference type="NCBI Taxonomy" id="360095"/>
    <lineage>
        <taxon>Bacteria</taxon>
        <taxon>Pseudomonadati</taxon>
        <taxon>Pseudomonadota</taxon>
        <taxon>Alphaproteobacteria</taxon>
        <taxon>Hyphomicrobiales</taxon>
        <taxon>Bartonellaceae</taxon>
        <taxon>Bartonella</taxon>
    </lineage>
</organism>
<keyword id="KW-0012">Acyltransferase</keyword>
<keyword id="KW-0133">Cell shape</keyword>
<keyword id="KW-0961">Cell wall biogenesis/degradation</keyword>
<keyword id="KW-0963">Cytoplasm</keyword>
<keyword id="KW-0460">Magnesium</keyword>
<keyword id="KW-0479">Metal-binding</keyword>
<keyword id="KW-0511">Multifunctional enzyme</keyword>
<keyword id="KW-0548">Nucleotidyltransferase</keyword>
<keyword id="KW-0573">Peptidoglycan synthesis</keyword>
<keyword id="KW-0677">Repeat</keyword>
<keyword id="KW-0808">Transferase</keyword>
<comment type="function">
    <text evidence="1">Catalyzes the last two sequential reactions in the de novo biosynthetic pathway for UDP-N-acetylglucosamine (UDP-GlcNAc). The C-terminal domain catalyzes the transfer of acetyl group from acetyl coenzyme A to glucosamine-1-phosphate (GlcN-1-P) to produce N-acetylglucosamine-1-phosphate (GlcNAc-1-P), which is converted into UDP-GlcNAc by the transfer of uridine 5-monophosphate (from uridine 5-triphosphate), a reaction catalyzed by the N-terminal domain.</text>
</comment>
<comment type="catalytic activity">
    <reaction evidence="1">
        <text>alpha-D-glucosamine 1-phosphate + acetyl-CoA = N-acetyl-alpha-D-glucosamine 1-phosphate + CoA + H(+)</text>
        <dbReference type="Rhea" id="RHEA:13725"/>
        <dbReference type="ChEBI" id="CHEBI:15378"/>
        <dbReference type="ChEBI" id="CHEBI:57287"/>
        <dbReference type="ChEBI" id="CHEBI:57288"/>
        <dbReference type="ChEBI" id="CHEBI:57776"/>
        <dbReference type="ChEBI" id="CHEBI:58516"/>
        <dbReference type="EC" id="2.3.1.157"/>
    </reaction>
</comment>
<comment type="catalytic activity">
    <reaction evidence="1">
        <text>N-acetyl-alpha-D-glucosamine 1-phosphate + UTP + H(+) = UDP-N-acetyl-alpha-D-glucosamine + diphosphate</text>
        <dbReference type="Rhea" id="RHEA:13509"/>
        <dbReference type="ChEBI" id="CHEBI:15378"/>
        <dbReference type="ChEBI" id="CHEBI:33019"/>
        <dbReference type="ChEBI" id="CHEBI:46398"/>
        <dbReference type="ChEBI" id="CHEBI:57705"/>
        <dbReference type="ChEBI" id="CHEBI:57776"/>
        <dbReference type="EC" id="2.7.7.23"/>
    </reaction>
</comment>
<comment type="cofactor">
    <cofactor evidence="1">
        <name>Mg(2+)</name>
        <dbReference type="ChEBI" id="CHEBI:18420"/>
    </cofactor>
    <text evidence="1">Binds 1 Mg(2+) ion per subunit.</text>
</comment>
<comment type="pathway">
    <text evidence="1">Nucleotide-sugar biosynthesis; UDP-N-acetyl-alpha-D-glucosamine biosynthesis; N-acetyl-alpha-D-glucosamine 1-phosphate from alpha-D-glucosamine 6-phosphate (route II): step 2/2.</text>
</comment>
<comment type="pathway">
    <text evidence="1">Nucleotide-sugar biosynthesis; UDP-N-acetyl-alpha-D-glucosamine biosynthesis; UDP-N-acetyl-alpha-D-glucosamine from N-acetyl-alpha-D-glucosamine 1-phosphate: step 1/1.</text>
</comment>
<comment type="pathway">
    <text evidence="1">Bacterial outer membrane biogenesis; LPS lipid A biosynthesis.</text>
</comment>
<comment type="subunit">
    <text evidence="1">Homotrimer.</text>
</comment>
<comment type="subcellular location">
    <subcellularLocation>
        <location evidence="1">Cytoplasm</location>
    </subcellularLocation>
</comment>
<comment type="similarity">
    <text evidence="1">In the N-terminal section; belongs to the N-acetylglucosamine-1-phosphate uridyltransferase family.</text>
</comment>
<comment type="similarity">
    <text evidence="1">In the C-terminal section; belongs to the transferase hexapeptide repeat family.</text>
</comment>
<proteinExistence type="inferred from homology"/>
<protein>
    <recommendedName>
        <fullName evidence="1">Bifunctional protein GlmU</fullName>
    </recommendedName>
    <domain>
        <recommendedName>
            <fullName evidence="1">UDP-N-acetylglucosamine pyrophosphorylase</fullName>
            <ecNumber evidence="1">2.7.7.23</ecNumber>
        </recommendedName>
        <alternativeName>
            <fullName evidence="1">N-acetylglucosamine-1-phosphate uridyltransferase</fullName>
        </alternativeName>
    </domain>
    <domain>
        <recommendedName>
            <fullName evidence="1">Glucosamine-1-phosphate N-acetyltransferase</fullName>
            <ecNumber evidence="1">2.3.1.157</ecNumber>
        </recommendedName>
    </domain>
</protein>
<reference key="1">
    <citation type="submission" date="2006-12" db="EMBL/GenBank/DDBJ databases">
        <authorList>
            <person name="Hendrix L."/>
            <person name="Mohamoud Y."/>
            <person name="Radune D."/>
            <person name="Shvartsbeyn A."/>
            <person name="Daugherty S."/>
            <person name="Dodson R."/>
            <person name="Durkin A.S."/>
            <person name="Harkins D."/>
            <person name="Huot H."/>
            <person name="Kothari S.P."/>
            <person name="Madupu R."/>
            <person name="Li J."/>
            <person name="Nelson W.C."/>
            <person name="Shrivastava S."/>
            <person name="Giglio M.G."/>
            <person name="Haft D."/>
            <person name="Selengut J."/>
            <person name="Fraser-Ligget C."/>
            <person name="Seshadri R."/>
        </authorList>
    </citation>
    <scope>NUCLEOTIDE SEQUENCE [LARGE SCALE GENOMIC DNA]</scope>
    <source>
        <strain>ATCC 35685 / KC583 / Herrer 020/F12,63</strain>
    </source>
</reference>
<sequence length="449" mass="48966">MVRNCLSIVLAAGEGTRMKSPLPKVLHKIAGLPLVCHVIKQIELAGSLQLAVVVGSGAEDITKVVQSFTKNAMIFEQKERLGTAHAVLSARLALQEEVDDILIVFGDTPLIEHSSLVRIRAFLADGADVVVAGFYASDPTGYGRLIKKNGKLITIVEEKDASDEEKKVSLCNGGIMALNGKYALSLLNKIDNNNMQQEYYLTDVVSIASRQNLNIQVVEIPFDNVIGINNCFELFEADALWQKRKARDLMLSGVTILKPESVYFSYDTEIEPGVLIEPNVYFGPGVKIQSGAVIRAFSYLEGAVVGRDAQIGPYARLRFGTELERSVKVGNFCEIKQAKVGEFSKINHLSYIGDTEIGTNTNIGAGAITCNYDGFNKHKTVIDDDVFIGSNSVLVAPLSIGKGSYIASGSVITEDVPINSMVFGRARQVIKEDRAIKLRAHLSKNKRNK</sequence>
<feature type="chain" id="PRO_0000337709" description="Bifunctional protein GlmU">
    <location>
        <begin position="1"/>
        <end position="449"/>
    </location>
</feature>
<feature type="region of interest" description="Pyrophosphorylase" evidence="1">
    <location>
        <begin position="1"/>
        <end position="231"/>
    </location>
</feature>
<feature type="region of interest" description="Linker" evidence="1">
    <location>
        <begin position="232"/>
        <end position="252"/>
    </location>
</feature>
<feature type="region of interest" description="N-acetyltransferase" evidence="1">
    <location>
        <begin position="253"/>
        <end position="449"/>
    </location>
</feature>
<feature type="active site" description="Proton acceptor" evidence="1">
    <location>
        <position position="348"/>
    </location>
</feature>
<feature type="binding site" evidence="1">
    <location>
        <begin position="10"/>
        <end position="13"/>
    </location>
    <ligand>
        <name>UDP-N-acetyl-alpha-D-glucosamine</name>
        <dbReference type="ChEBI" id="CHEBI:57705"/>
    </ligand>
</feature>
<feature type="binding site" evidence="1">
    <location>
        <position position="24"/>
    </location>
    <ligand>
        <name>UDP-N-acetyl-alpha-D-glucosamine</name>
        <dbReference type="ChEBI" id="CHEBI:57705"/>
    </ligand>
</feature>
<feature type="binding site" evidence="1">
    <location>
        <position position="77"/>
    </location>
    <ligand>
        <name>UDP-N-acetyl-alpha-D-glucosamine</name>
        <dbReference type="ChEBI" id="CHEBI:57705"/>
    </ligand>
</feature>
<feature type="binding site" evidence="1">
    <location>
        <begin position="82"/>
        <end position="83"/>
    </location>
    <ligand>
        <name>UDP-N-acetyl-alpha-D-glucosamine</name>
        <dbReference type="ChEBI" id="CHEBI:57705"/>
    </ligand>
</feature>
<feature type="binding site" evidence="1">
    <location>
        <position position="107"/>
    </location>
    <ligand>
        <name>Mg(2+)</name>
        <dbReference type="ChEBI" id="CHEBI:18420"/>
    </ligand>
</feature>
<feature type="binding site" evidence="1">
    <location>
        <position position="143"/>
    </location>
    <ligand>
        <name>UDP-N-acetyl-alpha-D-glucosamine</name>
        <dbReference type="ChEBI" id="CHEBI:57705"/>
    </ligand>
</feature>
<feature type="binding site" evidence="1">
    <location>
        <position position="157"/>
    </location>
    <ligand>
        <name>UDP-N-acetyl-alpha-D-glucosamine</name>
        <dbReference type="ChEBI" id="CHEBI:57705"/>
    </ligand>
</feature>
<feature type="binding site" evidence="1">
    <location>
        <position position="172"/>
    </location>
    <ligand>
        <name>UDP-N-acetyl-alpha-D-glucosamine</name>
        <dbReference type="ChEBI" id="CHEBI:57705"/>
    </ligand>
</feature>
<feature type="binding site" evidence="1">
    <location>
        <position position="229"/>
    </location>
    <ligand>
        <name>Mg(2+)</name>
        <dbReference type="ChEBI" id="CHEBI:18420"/>
    </ligand>
</feature>
<feature type="binding site" evidence="1">
    <location>
        <position position="229"/>
    </location>
    <ligand>
        <name>UDP-N-acetyl-alpha-D-glucosamine</name>
        <dbReference type="ChEBI" id="CHEBI:57705"/>
    </ligand>
</feature>
<feature type="binding site" evidence="1">
    <location>
        <position position="318"/>
    </location>
    <ligand>
        <name>UDP-N-acetyl-alpha-D-glucosamine</name>
        <dbReference type="ChEBI" id="CHEBI:57705"/>
    </ligand>
</feature>
<feature type="binding site" evidence="1">
    <location>
        <position position="336"/>
    </location>
    <ligand>
        <name>UDP-N-acetyl-alpha-D-glucosamine</name>
        <dbReference type="ChEBI" id="CHEBI:57705"/>
    </ligand>
</feature>
<feature type="binding site" evidence="1">
    <location>
        <position position="351"/>
    </location>
    <ligand>
        <name>UDP-N-acetyl-alpha-D-glucosamine</name>
        <dbReference type="ChEBI" id="CHEBI:57705"/>
    </ligand>
</feature>
<feature type="binding site" evidence="1">
    <location>
        <position position="362"/>
    </location>
    <ligand>
        <name>UDP-N-acetyl-alpha-D-glucosamine</name>
        <dbReference type="ChEBI" id="CHEBI:57705"/>
    </ligand>
</feature>
<feature type="binding site" evidence="1">
    <location>
        <position position="365"/>
    </location>
    <ligand>
        <name>acetyl-CoA</name>
        <dbReference type="ChEBI" id="CHEBI:57288"/>
    </ligand>
</feature>
<feature type="binding site" evidence="1">
    <location>
        <begin position="371"/>
        <end position="372"/>
    </location>
    <ligand>
        <name>acetyl-CoA</name>
        <dbReference type="ChEBI" id="CHEBI:57288"/>
    </ligand>
</feature>
<feature type="binding site" evidence="1">
    <location>
        <position position="390"/>
    </location>
    <ligand>
        <name>acetyl-CoA</name>
        <dbReference type="ChEBI" id="CHEBI:57288"/>
    </ligand>
</feature>
<feature type="binding site" evidence="1">
    <location>
        <position position="408"/>
    </location>
    <ligand>
        <name>acetyl-CoA</name>
        <dbReference type="ChEBI" id="CHEBI:57288"/>
    </ligand>
</feature>
<feature type="binding site" evidence="1">
    <location>
        <position position="425"/>
    </location>
    <ligand>
        <name>acetyl-CoA</name>
        <dbReference type="ChEBI" id="CHEBI:57288"/>
    </ligand>
</feature>
<accession>A1USU8</accession>
<evidence type="ECO:0000255" key="1">
    <source>
        <dbReference type="HAMAP-Rule" id="MF_01631"/>
    </source>
</evidence>
<gene>
    <name evidence="1" type="primary">glmU</name>
    <name type="ordered locus">BARBAKC583_0754</name>
</gene>
<dbReference type="EC" id="2.7.7.23" evidence="1"/>
<dbReference type="EC" id="2.3.1.157" evidence="1"/>
<dbReference type="EMBL" id="CP000524">
    <property type="protein sequence ID" value="ABM44579.1"/>
    <property type="molecule type" value="Genomic_DNA"/>
</dbReference>
<dbReference type="RefSeq" id="WP_005767034.1">
    <property type="nucleotide sequence ID" value="NC_008783.1"/>
</dbReference>
<dbReference type="SMR" id="A1USU8"/>
<dbReference type="STRING" id="360095.BARBAKC583_0754"/>
<dbReference type="GeneID" id="4684118"/>
<dbReference type="KEGG" id="bbk:BARBAKC583_0754"/>
<dbReference type="PATRIC" id="fig|360095.6.peg.732"/>
<dbReference type="eggNOG" id="COG1207">
    <property type="taxonomic scope" value="Bacteria"/>
</dbReference>
<dbReference type="HOGENOM" id="CLU_029499_15_2_5"/>
<dbReference type="OrthoDB" id="9775031at2"/>
<dbReference type="UniPathway" id="UPA00113">
    <property type="reaction ID" value="UER00532"/>
</dbReference>
<dbReference type="UniPathway" id="UPA00113">
    <property type="reaction ID" value="UER00533"/>
</dbReference>
<dbReference type="UniPathway" id="UPA00973"/>
<dbReference type="Proteomes" id="UP000000643">
    <property type="component" value="Chromosome"/>
</dbReference>
<dbReference type="GO" id="GO:0005737">
    <property type="term" value="C:cytoplasm"/>
    <property type="evidence" value="ECO:0007669"/>
    <property type="project" value="UniProtKB-SubCell"/>
</dbReference>
<dbReference type="GO" id="GO:0016020">
    <property type="term" value="C:membrane"/>
    <property type="evidence" value="ECO:0007669"/>
    <property type="project" value="GOC"/>
</dbReference>
<dbReference type="GO" id="GO:0019134">
    <property type="term" value="F:glucosamine-1-phosphate N-acetyltransferase activity"/>
    <property type="evidence" value="ECO:0007669"/>
    <property type="project" value="UniProtKB-UniRule"/>
</dbReference>
<dbReference type="GO" id="GO:0000287">
    <property type="term" value="F:magnesium ion binding"/>
    <property type="evidence" value="ECO:0007669"/>
    <property type="project" value="UniProtKB-UniRule"/>
</dbReference>
<dbReference type="GO" id="GO:0003977">
    <property type="term" value="F:UDP-N-acetylglucosamine diphosphorylase activity"/>
    <property type="evidence" value="ECO:0007669"/>
    <property type="project" value="UniProtKB-UniRule"/>
</dbReference>
<dbReference type="GO" id="GO:0000902">
    <property type="term" value="P:cell morphogenesis"/>
    <property type="evidence" value="ECO:0007669"/>
    <property type="project" value="UniProtKB-UniRule"/>
</dbReference>
<dbReference type="GO" id="GO:0071555">
    <property type="term" value="P:cell wall organization"/>
    <property type="evidence" value="ECO:0007669"/>
    <property type="project" value="UniProtKB-KW"/>
</dbReference>
<dbReference type="GO" id="GO:0009245">
    <property type="term" value="P:lipid A biosynthetic process"/>
    <property type="evidence" value="ECO:0007669"/>
    <property type="project" value="UniProtKB-UniRule"/>
</dbReference>
<dbReference type="GO" id="GO:0009252">
    <property type="term" value="P:peptidoglycan biosynthetic process"/>
    <property type="evidence" value="ECO:0007669"/>
    <property type="project" value="UniProtKB-UniRule"/>
</dbReference>
<dbReference type="GO" id="GO:0008360">
    <property type="term" value="P:regulation of cell shape"/>
    <property type="evidence" value="ECO:0007669"/>
    <property type="project" value="UniProtKB-KW"/>
</dbReference>
<dbReference type="GO" id="GO:0006048">
    <property type="term" value="P:UDP-N-acetylglucosamine biosynthetic process"/>
    <property type="evidence" value="ECO:0007669"/>
    <property type="project" value="UniProtKB-UniPathway"/>
</dbReference>
<dbReference type="CDD" id="cd02540">
    <property type="entry name" value="GT2_GlmU_N_bac"/>
    <property type="match status" value="1"/>
</dbReference>
<dbReference type="CDD" id="cd03353">
    <property type="entry name" value="LbH_GlmU_C"/>
    <property type="match status" value="1"/>
</dbReference>
<dbReference type="Gene3D" id="2.160.10.10">
    <property type="entry name" value="Hexapeptide repeat proteins"/>
    <property type="match status" value="1"/>
</dbReference>
<dbReference type="Gene3D" id="3.90.550.10">
    <property type="entry name" value="Spore Coat Polysaccharide Biosynthesis Protein SpsA, Chain A"/>
    <property type="match status" value="1"/>
</dbReference>
<dbReference type="HAMAP" id="MF_01631">
    <property type="entry name" value="GlmU"/>
    <property type="match status" value="1"/>
</dbReference>
<dbReference type="InterPro" id="IPR005882">
    <property type="entry name" value="Bifunctional_GlmU"/>
</dbReference>
<dbReference type="InterPro" id="IPR050065">
    <property type="entry name" value="GlmU-like"/>
</dbReference>
<dbReference type="InterPro" id="IPR038009">
    <property type="entry name" value="GlmU_C_LbH"/>
</dbReference>
<dbReference type="InterPro" id="IPR001451">
    <property type="entry name" value="Hexapep"/>
</dbReference>
<dbReference type="InterPro" id="IPR018357">
    <property type="entry name" value="Hexapep_transf_CS"/>
</dbReference>
<dbReference type="InterPro" id="IPR025877">
    <property type="entry name" value="MobA-like_NTP_Trfase"/>
</dbReference>
<dbReference type="InterPro" id="IPR029044">
    <property type="entry name" value="Nucleotide-diphossugar_trans"/>
</dbReference>
<dbReference type="InterPro" id="IPR011004">
    <property type="entry name" value="Trimer_LpxA-like_sf"/>
</dbReference>
<dbReference type="NCBIfam" id="TIGR01173">
    <property type="entry name" value="glmU"/>
    <property type="match status" value="1"/>
</dbReference>
<dbReference type="NCBIfam" id="NF010933">
    <property type="entry name" value="PRK14353.1"/>
    <property type="match status" value="1"/>
</dbReference>
<dbReference type="PANTHER" id="PTHR43584:SF3">
    <property type="entry name" value="BIFUNCTIONAL PROTEIN GLMU"/>
    <property type="match status" value="1"/>
</dbReference>
<dbReference type="PANTHER" id="PTHR43584">
    <property type="entry name" value="NUCLEOTIDYL TRANSFERASE"/>
    <property type="match status" value="1"/>
</dbReference>
<dbReference type="Pfam" id="PF00132">
    <property type="entry name" value="Hexapep"/>
    <property type="match status" value="2"/>
</dbReference>
<dbReference type="Pfam" id="PF12804">
    <property type="entry name" value="NTP_transf_3"/>
    <property type="match status" value="1"/>
</dbReference>
<dbReference type="SUPFAM" id="SSF53448">
    <property type="entry name" value="Nucleotide-diphospho-sugar transferases"/>
    <property type="match status" value="1"/>
</dbReference>
<dbReference type="SUPFAM" id="SSF51161">
    <property type="entry name" value="Trimeric LpxA-like enzymes"/>
    <property type="match status" value="1"/>
</dbReference>
<dbReference type="PROSITE" id="PS00101">
    <property type="entry name" value="HEXAPEP_TRANSFERASES"/>
    <property type="match status" value="1"/>
</dbReference>
<name>GLMU_BARBK</name>